<name>SYK_VIBCH</name>
<dbReference type="EC" id="6.1.1.6"/>
<dbReference type="EMBL" id="AE003852">
    <property type="protein sequence ID" value="AAF93829.1"/>
    <property type="status" value="ALT_INIT"/>
    <property type="molecule type" value="Genomic_DNA"/>
</dbReference>
<dbReference type="PIR" id="A82296">
    <property type="entry name" value="A82296"/>
</dbReference>
<dbReference type="RefSeq" id="NP_230313.1">
    <property type="nucleotide sequence ID" value="NC_002505.1"/>
</dbReference>
<dbReference type="RefSeq" id="WP_000128764.1">
    <property type="nucleotide sequence ID" value="NZ_LT906614.1"/>
</dbReference>
<dbReference type="SMR" id="Q9KU60"/>
<dbReference type="STRING" id="243277.VC_0664"/>
<dbReference type="DNASU" id="2615453"/>
<dbReference type="EnsemblBacteria" id="AAF93829">
    <property type="protein sequence ID" value="AAF93829"/>
    <property type="gene ID" value="VC_0664"/>
</dbReference>
<dbReference type="GeneID" id="88783964"/>
<dbReference type="KEGG" id="vch:VC_0664"/>
<dbReference type="PATRIC" id="fig|243277.26.peg.636"/>
<dbReference type="eggNOG" id="COG1190">
    <property type="taxonomic scope" value="Bacteria"/>
</dbReference>
<dbReference type="HOGENOM" id="CLU_008255_6_2_6"/>
<dbReference type="Proteomes" id="UP000000584">
    <property type="component" value="Chromosome 1"/>
</dbReference>
<dbReference type="GO" id="GO:0005737">
    <property type="term" value="C:cytoplasm"/>
    <property type="evidence" value="ECO:0000318"/>
    <property type="project" value="GO_Central"/>
</dbReference>
<dbReference type="GO" id="GO:0005829">
    <property type="term" value="C:cytosol"/>
    <property type="evidence" value="ECO:0000318"/>
    <property type="project" value="GO_Central"/>
</dbReference>
<dbReference type="GO" id="GO:0005524">
    <property type="term" value="F:ATP binding"/>
    <property type="evidence" value="ECO:0007669"/>
    <property type="project" value="UniProtKB-UniRule"/>
</dbReference>
<dbReference type="GO" id="GO:0004824">
    <property type="term" value="F:lysine-tRNA ligase activity"/>
    <property type="evidence" value="ECO:0000318"/>
    <property type="project" value="GO_Central"/>
</dbReference>
<dbReference type="GO" id="GO:0000287">
    <property type="term" value="F:magnesium ion binding"/>
    <property type="evidence" value="ECO:0007669"/>
    <property type="project" value="UniProtKB-UniRule"/>
</dbReference>
<dbReference type="GO" id="GO:0000049">
    <property type="term" value="F:tRNA binding"/>
    <property type="evidence" value="ECO:0000318"/>
    <property type="project" value="GO_Central"/>
</dbReference>
<dbReference type="GO" id="GO:0006430">
    <property type="term" value="P:lysyl-tRNA aminoacylation"/>
    <property type="evidence" value="ECO:0000318"/>
    <property type="project" value="GO_Central"/>
</dbReference>
<dbReference type="CDD" id="cd00775">
    <property type="entry name" value="LysRS_core"/>
    <property type="match status" value="1"/>
</dbReference>
<dbReference type="CDD" id="cd04322">
    <property type="entry name" value="LysRS_N"/>
    <property type="match status" value="1"/>
</dbReference>
<dbReference type="FunFam" id="2.40.50.140:FF:000024">
    <property type="entry name" value="Lysine--tRNA ligase"/>
    <property type="match status" value="1"/>
</dbReference>
<dbReference type="FunFam" id="3.30.930.10:FF:000001">
    <property type="entry name" value="Lysine--tRNA ligase"/>
    <property type="match status" value="1"/>
</dbReference>
<dbReference type="Gene3D" id="3.30.930.10">
    <property type="entry name" value="Bira Bifunctional Protein, Domain 2"/>
    <property type="match status" value="1"/>
</dbReference>
<dbReference type="Gene3D" id="2.40.50.140">
    <property type="entry name" value="Nucleic acid-binding proteins"/>
    <property type="match status" value="1"/>
</dbReference>
<dbReference type="HAMAP" id="MF_00252">
    <property type="entry name" value="Lys_tRNA_synth_class2"/>
    <property type="match status" value="1"/>
</dbReference>
<dbReference type="InterPro" id="IPR004364">
    <property type="entry name" value="Aa-tRNA-synt_II"/>
</dbReference>
<dbReference type="InterPro" id="IPR006195">
    <property type="entry name" value="aa-tRNA-synth_II"/>
</dbReference>
<dbReference type="InterPro" id="IPR045864">
    <property type="entry name" value="aa-tRNA-synth_II/BPL/LPL"/>
</dbReference>
<dbReference type="InterPro" id="IPR002313">
    <property type="entry name" value="Lys-tRNA-ligase_II"/>
</dbReference>
<dbReference type="InterPro" id="IPR044136">
    <property type="entry name" value="Lys-tRNA-ligase_II_N"/>
</dbReference>
<dbReference type="InterPro" id="IPR018149">
    <property type="entry name" value="Lys-tRNA-synth_II_C"/>
</dbReference>
<dbReference type="InterPro" id="IPR012340">
    <property type="entry name" value="NA-bd_OB-fold"/>
</dbReference>
<dbReference type="InterPro" id="IPR004365">
    <property type="entry name" value="NA-bd_OB_tRNA"/>
</dbReference>
<dbReference type="NCBIfam" id="TIGR00499">
    <property type="entry name" value="lysS_bact"/>
    <property type="match status" value="1"/>
</dbReference>
<dbReference type="NCBIfam" id="NF001756">
    <property type="entry name" value="PRK00484.1"/>
    <property type="match status" value="1"/>
</dbReference>
<dbReference type="PANTHER" id="PTHR42918:SF15">
    <property type="entry name" value="LYSINE--TRNA LIGASE, CHLOROPLASTIC_MITOCHONDRIAL"/>
    <property type="match status" value="1"/>
</dbReference>
<dbReference type="PANTHER" id="PTHR42918">
    <property type="entry name" value="LYSYL-TRNA SYNTHETASE"/>
    <property type="match status" value="1"/>
</dbReference>
<dbReference type="Pfam" id="PF00152">
    <property type="entry name" value="tRNA-synt_2"/>
    <property type="match status" value="1"/>
</dbReference>
<dbReference type="Pfam" id="PF01336">
    <property type="entry name" value="tRNA_anti-codon"/>
    <property type="match status" value="1"/>
</dbReference>
<dbReference type="PRINTS" id="PR00982">
    <property type="entry name" value="TRNASYNTHLYS"/>
</dbReference>
<dbReference type="SUPFAM" id="SSF55681">
    <property type="entry name" value="Class II aaRS and biotin synthetases"/>
    <property type="match status" value="1"/>
</dbReference>
<dbReference type="SUPFAM" id="SSF50249">
    <property type="entry name" value="Nucleic acid-binding proteins"/>
    <property type="match status" value="1"/>
</dbReference>
<dbReference type="PROSITE" id="PS50862">
    <property type="entry name" value="AA_TRNA_LIGASE_II"/>
    <property type="match status" value="1"/>
</dbReference>
<feature type="chain" id="PRO_0000152700" description="Lysine--tRNA ligase">
    <location>
        <begin position="1"/>
        <end position="510"/>
    </location>
</feature>
<feature type="binding site" evidence="1">
    <location>
        <position position="420"/>
    </location>
    <ligand>
        <name>Mg(2+)</name>
        <dbReference type="ChEBI" id="CHEBI:18420"/>
        <label>1</label>
    </ligand>
</feature>
<feature type="binding site" evidence="1">
    <location>
        <position position="427"/>
    </location>
    <ligand>
        <name>Mg(2+)</name>
        <dbReference type="ChEBI" id="CHEBI:18420"/>
        <label>1</label>
    </ligand>
</feature>
<feature type="binding site" evidence="1">
    <location>
        <position position="427"/>
    </location>
    <ligand>
        <name>Mg(2+)</name>
        <dbReference type="ChEBI" id="CHEBI:18420"/>
        <label>2</label>
    </ligand>
</feature>
<protein>
    <recommendedName>
        <fullName>Lysine--tRNA ligase</fullName>
        <ecNumber>6.1.1.6</ecNumber>
    </recommendedName>
    <alternativeName>
        <fullName>Lysyl-tRNA synthetase</fullName>
        <shortName>LysRS</shortName>
    </alternativeName>
</protein>
<keyword id="KW-0030">Aminoacyl-tRNA synthetase</keyword>
<keyword id="KW-0067">ATP-binding</keyword>
<keyword id="KW-0963">Cytoplasm</keyword>
<keyword id="KW-0436">Ligase</keyword>
<keyword id="KW-0460">Magnesium</keyword>
<keyword id="KW-0479">Metal-binding</keyword>
<keyword id="KW-0547">Nucleotide-binding</keyword>
<keyword id="KW-0648">Protein biosynthesis</keyword>
<keyword id="KW-1185">Reference proteome</keyword>
<proteinExistence type="inferred from homology"/>
<sequence>MTDAVQNEINQEQIAQEENKLIAERRSKLDHIRKNCKANGHPNSFRRDSLAGDLQKKFGEKSKEELEALNHVVSIAGRVMAKRGPFLVIQETSGRIQAYASKEVQQELKDKYQGLDIGDIIGVQGALHKSGKGDLYVNMEQFQLLTKALRPLPEKFHGLTDQEMRYRQRYVDLIVNENSRNAFIVRSKVMSAIRNFMISKQFMEVETPMMHVIPGGASARPFITHHNALDMPMYLRIAPELYLKRLVVGGFDRVFEINRNFRNEGLSPRHNPEFTMMEFYMAYADYKDLMDLTEELLSSVALEVLGSTSMPYGEHTVEFGGKYARMSMFDAIKHYNPNHAQIQALTEEDIQNRDLMVSIAKSVHVDVEPFWTCGQLLEEIFGETAEPKLMQPTFITGYPADISPLARRSDDNPFFTDRFEFFIGGREVANGFSELNDAEDQDARFKAQVEAKESGDDEAMFYDADYITALEHGLPPTAGQGIGIDRLVMLLTNTHTIRDVILFPAMRPQQ</sequence>
<organism>
    <name type="scientific">Vibrio cholerae serotype O1 (strain ATCC 39315 / El Tor Inaba N16961)</name>
    <dbReference type="NCBI Taxonomy" id="243277"/>
    <lineage>
        <taxon>Bacteria</taxon>
        <taxon>Pseudomonadati</taxon>
        <taxon>Pseudomonadota</taxon>
        <taxon>Gammaproteobacteria</taxon>
        <taxon>Vibrionales</taxon>
        <taxon>Vibrionaceae</taxon>
        <taxon>Vibrio</taxon>
    </lineage>
</organism>
<gene>
    <name type="primary">lysS</name>
    <name type="ordered locus">VC_0664</name>
</gene>
<comment type="catalytic activity">
    <reaction>
        <text>tRNA(Lys) + L-lysine + ATP = L-lysyl-tRNA(Lys) + AMP + diphosphate</text>
        <dbReference type="Rhea" id="RHEA:20792"/>
        <dbReference type="Rhea" id="RHEA-COMP:9696"/>
        <dbReference type="Rhea" id="RHEA-COMP:9697"/>
        <dbReference type="ChEBI" id="CHEBI:30616"/>
        <dbReference type="ChEBI" id="CHEBI:32551"/>
        <dbReference type="ChEBI" id="CHEBI:33019"/>
        <dbReference type="ChEBI" id="CHEBI:78442"/>
        <dbReference type="ChEBI" id="CHEBI:78529"/>
        <dbReference type="ChEBI" id="CHEBI:456215"/>
        <dbReference type="EC" id="6.1.1.6"/>
    </reaction>
</comment>
<comment type="cofactor">
    <cofactor evidence="1">
        <name>Mg(2+)</name>
        <dbReference type="ChEBI" id="CHEBI:18420"/>
    </cofactor>
    <text evidence="1">Binds 3 Mg(2+) ions per subunit.</text>
</comment>
<comment type="subunit">
    <text evidence="1">Homodimer.</text>
</comment>
<comment type="subcellular location">
    <subcellularLocation>
        <location evidence="1">Cytoplasm</location>
    </subcellularLocation>
</comment>
<comment type="similarity">
    <text evidence="2">Belongs to the class-II aminoacyl-tRNA synthetase family.</text>
</comment>
<comment type="sequence caution" evidence="2">
    <conflict type="erroneous initiation">
        <sequence resource="EMBL-CDS" id="AAF93829"/>
    </conflict>
</comment>
<evidence type="ECO:0000250" key="1"/>
<evidence type="ECO:0000305" key="2"/>
<accession>Q9KU60</accession>
<reference key="1">
    <citation type="journal article" date="2000" name="Nature">
        <title>DNA sequence of both chromosomes of the cholera pathogen Vibrio cholerae.</title>
        <authorList>
            <person name="Heidelberg J.F."/>
            <person name="Eisen J.A."/>
            <person name="Nelson W.C."/>
            <person name="Clayton R.A."/>
            <person name="Gwinn M.L."/>
            <person name="Dodson R.J."/>
            <person name="Haft D.H."/>
            <person name="Hickey E.K."/>
            <person name="Peterson J.D."/>
            <person name="Umayam L.A."/>
            <person name="Gill S.R."/>
            <person name="Nelson K.E."/>
            <person name="Read T.D."/>
            <person name="Tettelin H."/>
            <person name="Richardson D.L."/>
            <person name="Ermolaeva M.D."/>
            <person name="Vamathevan J.J."/>
            <person name="Bass S."/>
            <person name="Qin H."/>
            <person name="Dragoi I."/>
            <person name="Sellers P."/>
            <person name="McDonald L.A."/>
            <person name="Utterback T.R."/>
            <person name="Fleischmann R.D."/>
            <person name="Nierman W.C."/>
            <person name="White O."/>
            <person name="Salzberg S.L."/>
            <person name="Smith H.O."/>
            <person name="Colwell R.R."/>
            <person name="Mekalanos J.J."/>
            <person name="Venter J.C."/>
            <person name="Fraser C.M."/>
        </authorList>
    </citation>
    <scope>NUCLEOTIDE SEQUENCE [LARGE SCALE GENOMIC DNA]</scope>
    <source>
        <strain>ATCC 39315 / El Tor Inaba N16961</strain>
    </source>
</reference>